<evidence type="ECO:0000255" key="1">
    <source>
        <dbReference type="HAMAP-Rule" id="MF_00041"/>
    </source>
</evidence>
<evidence type="ECO:0000256" key="2">
    <source>
        <dbReference type="SAM" id="MobiDB-lite"/>
    </source>
</evidence>
<evidence type="ECO:0000269" key="3">
    <source>
    </source>
</evidence>
<comment type="catalytic activity">
    <reaction evidence="1 3">
        <text>tRNA(Cys) + L-cysteine + ATP = L-cysteinyl-tRNA(Cys) + AMP + diphosphate</text>
        <dbReference type="Rhea" id="RHEA:17773"/>
        <dbReference type="Rhea" id="RHEA-COMP:9661"/>
        <dbReference type="Rhea" id="RHEA-COMP:9679"/>
        <dbReference type="ChEBI" id="CHEBI:30616"/>
        <dbReference type="ChEBI" id="CHEBI:33019"/>
        <dbReference type="ChEBI" id="CHEBI:35235"/>
        <dbReference type="ChEBI" id="CHEBI:78442"/>
        <dbReference type="ChEBI" id="CHEBI:78517"/>
        <dbReference type="ChEBI" id="CHEBI:456215"/>
        <dbReference type="EC" id="6.1.1.16"/>
    </reaction>
</comment>
<comment type="cofactor">
    <cofactor evidence="1">
        <name>Zn(2+)</name>
        <dbReference type="ChEBI" id="CHEBI:29105"/>
    </cofactor>
    <text evidence="1">Binds 1 zinc ion per subunit.</text>
</comment>
<comment type="biophysicochemical properties">
    <kinetics>
        <KM evidence="3">1.39 uM for tRNA(Cys)</KM>
        <text>The catalytic activity of the enzyme increases with increasing salt concentrations and has its maximum at 3 M potassium chloride.</text>
    </kinetics>
</comment>
<comment type="subcellular location">
    <subcellularLocation>
        <location evidence="1">Cytoplasm</location>
    </subcellularLocation>
</comment>
<comment type="similarity">
    <text evidence="1">Belongs to the class-I aminoacyl-tRNA synthetase family.</text>
</comment>
<keyword id="KW-0030">Aminoacyl-tRNA synthetase</keyword>
<keyword id="KW-0067">ATP-binding</keyword>
<keyword id="KW-0963">Cytoplasm</keyword>
<keyword id="KW-0436">Ligase</keyword>
<keyword id="KW-0479">Metal-binding</keyword>
<keyword id="KW-0547">Nucleotide-binding</keyword>
<keyword id="KW-0648">Protein biosynthesis</keyword>
<keyword id="KW-1185">Reference proteome</keyword>
<keyword id="KW-0862">Zinc</keyword>
<gene>
    <name evidence="1" type="primary">cysS</name>
    <name type="ordered locus">VNG_1097G</name>
</gene>
<proteinExistence type="evidence at protein level"/>
<feature type="chain" id="PRO_0000159535" description="Cysteine--tRNA ligase">
    <location>
        <begin position="1"/>
        <end position="494"/>
    </location>
</feature>
<feature type="region of interest" description="Disordered" evidence="2">
    <location>
        <begin position="187"/>
        <end position="220"/>
    </location>
</feature>
<feature type="short sequence motif" description="'HIGH' region">
    <location>
        <begin position="31"/>
        <end position="41"/>
    </location>
</feature>
<feature type="short sequence motif" description="'KMSKS' region">
    <location>
        <begin position="287"/>
        <end position="291"/>
    </location>
</feature>
<feature type="compositionally biased region" description="Basic and acidic residues" evidence="2">
    <location>
        <begin position="196"/>
        <end position="211"/>
    </location>
</feature>
<feature type="binding site" evidence="1">
    <location>
        <position position="29"/>
    </location>
    <ligand>
        <name>Zn(2+)</name>
        <dbReference type="ChEBI" id="CHEBI:29105"/>
    </ligand>
</feature>
<feature type="binding site" evidence="1">
    <location>
        <position position="230"/>
    </location>
    <ligand>
        <name>Zn(2+)</name>
        <dbReference type="ChEBI" id="CHEBI:29105"/>
    </ligand>
</feature>
<feature type="binding site" evidence="1">
    <location>
        <position position="255"/>
    </location>
    <ligand>
        <name>Zn(2+)</name>
        <dbReference type="ChEBI" id="CHEBI:29105"/>
    </ligand>
</feature>
<feature type="binding site" evidence="1">
    <location>
        <position position="259"/>
    </location>
    <ligand>
        <name>Zn(2+)</name>
        <dbReference type="ChEBI" id="CHEBI:29105"/>
    </ligand>
</feature>
<accession>Q9HQL9</accession>
<dbReference type="EC" id="6.1.1.16" evidence="1"/>
<dbReference type="EMBL" id="AE004437">
    <property type="protein sequence ID" value="AAG19494.1"/>
    <property type="molecule type" value="Genomic_DNA"/>
</dbReference>
<dbReference type="PIR" id="B84266">
    <property type="entry name" value="B84266"/>
</dbReference>
<dbReference type="RefSeq" id="WP_010902789.1">
    <property type="nucleotide sequence ID" value="NC_002607.1"/>
</dbReference>
<dbReference type="SMR" id="Q9HQL9"/>
<dbReference type="STRING" id="64091.VNG_1097G"/>
<dbReference type="PaxDb" id="64091-VNG_1097G"/>
<dbReference type="GeneID" id="68693886"/>
<dbReference type="KEGG" id="hal:VNG_1097G"/>
<dbReference type="PATRIC" id="fig|64091.14.peg.840"/>
<dbReference type="HOGENOM" id="CLU_013528_0_1_2"/>
<dbReference type="InParanoid" id="Q9HQL9"/>
<dbReference type="OrthoDB" id="9445at2157"/>
<dbReference type="PhylomeDB" id="Q9HQL9"/>
<dbReference type="Proteomes" id="UP000000554">
    <property type="component" value="Chromosome"/>
</dbReference>
<dbReference type="GO" id="GO:0005737">
    <property type="term" value="C:cytoplasm"/>
    <property type="evidence" value="ECO:0000318"/>
    <property type="project" value="GO_Central"/>
</dbReference>
<dbReference type="GO" id="GO:0005524">
    <property type="term" value="F:ATP binding"/>
    <property type="evidence" value="ECO:0000318"/>
    <property type="project" value="GO_Central"/>
</dbReference>
<dbReference type="GO" id="GO:0004817">
    <property type="term" value="F:cysteine-tRNA ligase activity"/>
    <property type="evidence" value="ECO:0000318"/>
    <property type="project" value="GO_Central"/>
</dbReference>
<dbReference type="GO" id="GO:0008270">
    <property type="term" value="F:zinc ion binding"/>
    <property type="evidence" value="ECO:0007669"/>
    <property type="project" value="UniProtKB-UniRule"/>
</dbReference>
<dbReference type="GO" id="GO:0006423">
    <property type="term" value="P:cysteinyl-tRNA aminoacylation"/>
    <property type="evidence" value="ECO:0000318"/>
    <property type="project" value="GO_Central"/>
</dbReference>
<dbReference type="CDD" id="cd00672">
    <property type="entry name" value="CysRS_core"/>
    <property type="match status" value="1"/>
</dbReference>
<dbReference type="FunFam" id="1.20.120.1910:FF:000022">
    <property type="entry name" value="Cysteine--tRNA ligase"/>
    <property type="match status" value="1"/>
</dbReference>
<dbReference type="Gene3D" id="1.20.120.1910">
    <property type="entry name" value="Cysteine-tRNA ligase, C-terminal anti-codon recognition domain"/>
    <property type="match status" value="1"/>
</dbReference>
<dbReference type="Gene3D" id="3.40.50.620">
    <property type="entry name" value="HUPs"/>
    <property type="match status" value="1"/>
</dbReference>
<dbReference type="HAMAP" id="MF_00041">
    <property type="entry name" value="Cys_tRNA_synth"/>
    <property type="match status" value="1"/>
</dbReference>
<dbReference type="InterPro" id="IPR015803">
    <property type="entry name" value="Cys-tRNA-ligase"/>
</dbReference>
<dbReference type="InterPro" id="IPR015273">
    <property type="entry name" value="Cys-tRNA-synt_Ia_DALR"/>
</dbReference>
<dbReference type="InterPro" id="IPR024909">
    <property type="entry name" value="Cys-tRNA/MSH_ligase"/>
</dbReference>
<dbReference type="InterPro" id="IPR056411">
    <property type="entry name" value="CysS_C"/>
</dbReference>
<dbReference type="InterPro" id="IPR014729">
    <property type="entry name" value="Rossmann-like_a/b/a_fold"/>
</dbReference>
<dbReference type="InterPro" id="IPR032678">
    <property type="entry name" value="tRNA-synt_1_cat_dom"/>
</dbReference>
<dbReference type="InterPro" id="IPR009080">
    <property type="entry name" value="tRNAsynth_Ia_anticodon-bd"/>
</dbReference>
<dbReference type="NCBIfam" id="TIGR00435">
    <property type="entry name" value="cysS"/>
    <property type="match status" value="1"/>
</dbReference>
<dbReference type="PANTHER" id="PTHR10890:SF3">
    <property type="entry name" value="CYSTEINE--TRNA LIGASE, CYTOPLASMIC"/>
    <property type="match status" value="1"/>
</dbReference>
<dbReference type="PANTHER" id="PTHR10890">
    <property type="entry name" value="CYSTEINYL-TRNA SYNTHETASE"/>
    <property type="match status" value="1"/>
</dbReference>
<dbReference type="Pfam" id="PF23493">
    <property type="entry name" value="CysS_C"/>
    <property type="match status" value="1"/>
</dbReference>
<dbReference type="Pfam" id="PF09190">
    <property type="entry name" value="DALR_2"/>
    <property type="match status" value="1"/>
</dbReference>
<dbReference type="Pfam" id="PF01406">
    <property type="entry name" value="tRNA-synt_1e"/>
    <property type="match status" value="1"/>
</dbReference>
<dbReference type="PRINTS" id="PR00983">
    <property type="entry name" value="TRNASYNTHCYS"/>
</dbReference>
<dbReference type="SMART" id="SM00840">
    <property type="entry name" value="DALR_2"/>
    <property type="match status" value="1"/>
</dbReference>
<dbReference type="SUPFAM" id="SSF47323">
    <property type="entry name" value="Anticodon-binding domain of a subclass of class I aminoacyl-tRNA synthetases"/>
    <property type="match status" value="1"/>
</dbReference>
<dbReference type="SUPFAM" id="SSF52374">
    <property type="entry name" value="Nucleotidylyl transferase"/>
    <property type="match status" value="1"/>
</dbReference>
<sequence length="494" mass="54035">MTQYVSNTRSGEQEAFEPDDPENVLVYTCGLTVSDDAHLGHARLWVQSDVMTRWLSHAGYGVRHVQNVTDVNEKIVARVGADGLGDTEAAVAAHYTQSVIDDMRALNLARADVYPRVSEHVPEIIDLIGDLVDAGYAYEAGGSVYFDVRRFEEYGALSGQQVDELDPQGPDAEQAEKRHPADFALWKAGGVSPDDANTHRDDELPPLDGERGQTWASPWGEGRPGWHIECSAMAMTHLDDHIDIHVGGQDLVFPHHENEIAQSEAASGERFADHWLHVRLLETDGEKMSSSLGNFFTVSNAVAERGPNVVRMLLVSTSYTQRQTYSEATVSEATQRWERLQRAHERAADAIDSVAAHAKPADDALRTAVADARGEFAAAMRADFNTRAAVSALLELASAVNRHVDGTDTYDYQGLHDAVDAFETLGGDVLGLQFDDGAGEDAVSLADDVIDLVLDVREQERTAGNYERADDLRDRLEALGVSVEDTDDGATVRR</sequence>
<organism>
    <name type="scientific">Halobacterium salinarum (strain ATCC 700922 / JCM 11081 / NRC-1)</name>
    <name type="common">Halobacterium halobium</name>
    <dbReference type="NCBI Taxonomy" id="64091"/>
    <lineage>
        <taxon>Archaea</taxon>
        <taxon>Methanobacteriati</taxon>
        <taxon>Methanobacteriota</taxon>
        <taxon>Stenosarchaea group</taxon>
        <taxon>Halobacteria</taxon>
        <taxon>Halobacteriales</taxon>
        <taxon>Halobacteriaceae</taxon>
        <taxon>Halobacterium</taxon>
        <taxon>Halobacterium salinarum NRC-34001</taxon>
    </lineage>
</organism>
<protein>
    <recommendedName>
        <fullName evidence="1">Cysteine--tRNA ligase</fullName>
        <ecNumber evidence="1">6.1.1.16</ecNumber>
    </recommendedName>
    <alternativeName>
        <fullName evidence="1">Cysteinyl-tRNA synthetase</fullName>
        <shortName evidence="1">CysRS</shortName>
    </alternativeName>
</protein>
<name>SYC_HALSA</name>
<reference key="1">
    <citation type="journal article" date="2000" name="Proc. Natl. Acad. Sci. U.S.A.">
        <title>Genome sequence of Halobacterium species NRC-1.</title>
        <authorList>
            <person name="Ng W.V."/>
            <person name="Kennedy S.P."/>
            <person name="Mahairas G.G."/>
            <person name="Berquist B."/>
            <person name="Pan M."/>
            <person name="Shukla H.D."/>
            <person name="Lasky S.R."/>
            <person name="Baliga N.S."/>
            <person name="Thorsson V."/>
            <person name="Sbrogna J."/>
            <person name="Swartzell S."/>
            <person name="Weir D."/>
            <person name="Hall J."/>
            <person name="Dahl T.A."/>
            <person name="Welti R."/>
            <person name="Goo Y.A."/>
            <person name="Leithauser B."/>
            <person name="Keller K."/>
            <person name="Cruz R."/>
            <person name="Danson M.J."/>
            <person name="Hough D.W."/>
            <person name="Maddocks D.G."/>
            <person name="Jablonski P.E."/>
            <person name="Krebs M.P."/>
            <person name="Angevine C.M."/>
            <person name="Dale H."/>
            <person name="Isenbarger T.A."/>
            <person name="Peck R.F."/>
            <person name="Pohlschroder M."/>
            <person name="Spudich J.L."/>
            <person name="Jung K.-H."/>
            <person name="Alam M."/>
            <person name="Freitas T."/>
            <person name="Hou S."/>
            <person name="Daniels C.J."/>
            <person name="Dennis P.P."/>
            <person name="Omer A.D."/>
            <person name="Ebhardt H."/>
            <person name="Lowe T.M."/>
            <person name="Liang P."/>
            <person name="Riley M."/>
            <person name="Hood L."/>
            <person name="DasSarma S."/>
        </authorList>
    </citation>
    <scope>NUCLEOTIDE SEQUENCE [LARGE SCALE GENOMIC DNA]</scope>
    <source>
        <strain>ATCC 700922 / JCM 11081 / NRC-1</strain>
    </source>
</reference>
<reference key="2">
    <citation type="journal article" date="2003" name="RNA">
        <title>Aminoacylation of an unusual tRNA(Cys) from an extreme halophile.</title>
        <authorList>
            <person name="Evilia C."/>
            <person name="Ming X."/>
            <person name="DasSarma S."/>
            <person name="Hou Y.M."/>
        </authorList>
    </citation>
    <scope>CATALYTIC ACTIVITY</scope>
    <scope>BIOPHYSICOCHEMICAL PROPERTIES</scope>
    <source>
        <strain>ATCC 700922 / JCM 11081 / NRC-1</strain>
    </source>
</reference>